<organism>
    <name type="scientific">Aeromonas salmonicida (strain A449)</name>
    <dbReference type="NCBI Taxonomy" id="382245"/>
    <lineage>
        <taxon>Bacteria</taxon>
        <taxon>Pseudomonadati</taxon>
        <taxon>Pseudomonadota</taxon>
        <taxon>Gammaproteobacteria</taxon>
        <taxon>Aeromonadales</taxon>
        <taxon>Aeromonadaceae</taxon>
        <taxon>Aeromonas</taxon>
    </lineage>
</organism>
<protein>
    <recommendedName>
        <fullName evidence="1">Small ribosomal subunit protein uS7</fullName>
    </recommendedName>
    <alternativeName>
        <fullName evidence="2">30S ribosomal protein S7</fullName>
    </alternativeName>
</protein>
<proteinExistence type="inferred from homology"/>
<comment type="function">
    <text evidence="1">One of the primary rRNA binding proteins, it binds directly to 16S rRNA where it nucleates assembly of the head domain of the 30S subunit. Is located at the subunit interface close to the decoding center, probably blocks exit of the E-site tRNA.</text>
</comment>
<comment type="subunit">
    <text evidence="1">Part of the 30S ribosomal subunit. Contacts proteins S9 and S11.</text>
</comment>
<comment type="similarity">
    <text evidence="1">Belongs to the universal ribosomal protein uS7 family.</text>
</comment>
<accession>A4SHV7</accession>
<sequence length="156" mass="17419">MPRRRVVGQRKILPDPKFGSELLAKFVNVVMVDGKKSVSEAIVYGALDIIATKSGKDHLAVFEEALDNIRPAVEVKSRRVGGATYQVPVEVRPVRRNALAMRWLVDAARKRGEKSMAQRLAGELLDAADNKGSSVKKREDVHRMAEANKAFAHFRW</sequence>
<feature type="chain" id="PRO_1000014139" description="Small ribosomal subunit protein uS7">
    <location>
        <begin position="1"/>
        <end position="156"/>
    </location>
</feature>
<name>RS7_AERS4</name>
<dbReference type="EMBL" id="CP000644">
    <property type="protein sequence ID" value="ABO88479.1"/>
    <property type="molecule type" value="Genomic_DNA"/>
</dbReference>
<dbReference type="RefSeq" id="WP_005318583.1">
    <property type="nucleotide sequence ID" value="NC_009348.1"/>
</dbReference>
<dbReference type="SMR" id="A4SHV7"/>
<dbReference type="STRING" id="29491.GCA_000820065_03168"/>
<dbReference type="GeneID" id="79881706"/>
<dbReference type="KEGG" id="asa:ASA_0291"/>
<dbReference type="eggNOG" id="COG0049">
    <property type="taxonomic scope" value="Bacteria"/>
</dbReference>
<dbReference type="HOGENOM" id="CLU_072226_1_1_6"/>
<dbReference type="Proteomes" id="UP000000225">
    <property type="component" value="Chromosome"/>
</dbReference>
<dbReference type="GO" id="GO:0015935">
    <property type="term" value="C:small ribosomal subunit"/>
    <property type="evidence" value="ECO:0007669"/>
    <property type="project" value="InterPro"/>
</dbReference>
<dbReference type="GO" id="GO:0019843">
    <property type="term" value="F:rRNA binding"/>
    <property type="evidence" value="ECO:0007669"/>
    <property type="project" value="UniProtKB-UniRule"/>
</dbReference>
<dbReference type="GO" id="GO:0003735">
    <property type="term" value="F:structural constituent of ribosome"/>
    <property type="evidence" value="ECO:0007669"/>
    <property type="project" value="InterPro"/>
</dbReference>
<dbReference type="GO" id="GO:0000049">
    <property type="term" value="F:tRNA binding"/>
    <property type="evidence" value="ECO:0007669"/>
    <property type="project" value="UniProtKB-UniRule"/>
</dbReference>
<dbReference type="GO" id="GO:0006412">
    <property type="term" value="P:translation"/>
    <property type="evidence" value="ECO:0007669"/>
    <property type="project" value="UniProtKB-UniRule"/>
</dbReference>
<dbReference type="CDD" id="cd14869">
    <property type="entry name" value="uS7_Bacteria"/>
    <property type="match status" value="1"/>
</dbReference>
<dbReference type="FunFam" id="1.10.455.10:FF:000001">
    <property type="entry name" value="30S ribosomal protein S7"/>
    <property type="match status" value="1"/>
</dbReference>
<dbReference type="Gene3D" id="1.10.455.10">
    <property type="entry name" value="Ribosomal protein S7 domain"/>
    <property type="match status" value="1"/>
</dbReference>
<dbReference type="HAMAP" id="MF_00480_B">
    <property type="entry name" value="Ribosomal_uS7_B"/>
    <property type="match status" value="1"/>
</dbReference>
<dbReference type="InterPro" id="IPR000235">
    <property type="entry name" value="Ribosomal_uS7"/>
</dbReference>
<dbReference type="InterPro" id="IPR005717">
    <property type="entry name" value="Ribosomal_uS7_bac/org-type"/>
</dbReference>
<dbReference type="InterPro" id="IPR020606">
    <property type="entry name" value="Ribosomal_uS7_CS"/>
</dbReference>
<dbReference type="InterPro" id="IPR023798">
    <property type="entry name" value="Ribosomal_uS7_dom"/>
</dbReference>
<dbReference type="InterPro" id="IPR036823">
    <property type="entry name" value="Ribosomal_uS7_dom_sf"/>
</dbReference>
<dbReference type="NCBIfam" id="TIGR01029">
    <property type="entry name" value="rpsG_bact"/>
    <property type="match status" value="1"/>
</dbReference>
<dbReference type="PANTHER" id="PTHR11205">
    <property type="entry name" value="RIBOSOMAL PROTEIN S7"/>
    <property type="match status" value="1"/>
</dbReference>
<dbReference type="Pfam" id="PF00177">
    <property type="entry name" value="Ribosomal_S7"/>
    <property type="match status" value="1"/>
</dbReference>
<dbReference type="PIRSF" id="PIRSF002122">
    <property type="entry name" value="RPS7p_RPS7a_RPS5e_RPS7o"/>
    <property type="match status" value="1"/>
</dbReference>
<dbReference type="SUPFAM" id="SSF47973">
    <property type="entry name" value="Ribosomal protein S7"/>
    <property type="match status" value="1"/>
</dbReference>
<dbReference type="PROSITE" id="PS00052">
    <property type="entry name" value="RIBOSOMAL_S7"/>
    <property type="match status" value="1"/>
</dbReference>
<evidence type="ECO:0000255" key="1">
    <source>
        <dbReference type="HAMAP-Rule" id="MF_00480"/>
    </source>
</evidence>
<evidence type="ECO:0000305" key="2"/>
<keyword id="KW-0687">Ribonucleoprotein</keyword>
<keyword id="KW-0689">Ribosomal protein</keyword>
<keyword id="KW-0694">RNA-binding</keyword>
<keyword id="KW-0699">rRNA-binding</keyword>
<keyword id="KW-0820">tRNA-binding</keyword>
<gene>
    <name evidence="1" type="primary">rpsG</name>
    <name type="ordered locus">ASA_0291</name>
</gene>
<reference key="1">
    <citation type="journal article" date="2008" name="BMC Genomics">
        <title>The genome of Aeromonas salmonicida subsp. salmonicida A449: insights into the evolution of a fish pathogen.</title>
        <authorList>
            <person name="Reith M.E."/>
            <person name="Singh R.K."/>
            <person name="Curtis B."/>
            <person name="Boyd J.M."/>
            <person name="Bouevitch A."/>
            <person name="Kimball J."/>
            <person name="Munholland J."/>
            <person name="Murphy C."/>
            <person name="Sarty D."/>
            <person name="Williams J."/>
            <person name="Nash J.H."/>
            <person name="Johnson S.C."/>
            <person name="Brown L.L."/>
        </authorList>
    </citation>
    <scope>NUCLEOTIDE SEQUENCE [LARGE SCALE GENOMIC DNA]</scope>
    <source>
        <strain>A449</strain>
    </source>
</reference>